<sequence length="137" mass="15716">MARVLNVEIPNHKRIVIALCSIFGIGKSLATEIVEKTAKLQEEKFGKKFPILTENTKVKEINEEVLQVIRDVAKTYKTEGDLHREVQSNIKRLIEIKCYRGIRHRKGLPVRGQVTQKNARTRKGPRKTIMAKKDKGK</sequence>
<organism>
    <name type="scientific">Mesomycoplasma hyopneumoniae (strain J / ATCC 25934 / NCTC 10110)</name>
    <name type="common">Mycoplasma hyopneumoniae</name>
    <dbReference type="NCBI Taxonomy" id="262719"/>
    <lineage>
        <taxon>Bacteria</taxon>
        <taxon>Bacillati</taxon>
        <taxon>Mycoplasmatota</taxon>
        <taxon>Mycoplasmoidales</taxon>
        <taxon>Metamycoplasmataceae</taxon>
        <taxon>Mesomycoplasma</taxon>
    </lineage>
</organism>
<evidence type="ECO:0000255" key="1">
    <source>
        <dbReference type="HAMAP-Rule" id="MF_01315"/>
    </source>
</evidence>
<evidence type="ECO:0000256" key="2">
    <source>
        <dbReference type="SAM" id="MobiDB-lite"/>
    </source>
</evidence>
<evidence type="ECO:0000305" key="3"/>
<comment type="function">
    <text evidence="1">Located at the top of the head of the 30S subunit, it contacts several helices of the 16S rRNA. In the 70S ribosome it contacts the 23S rRNA (bridge B1a) and protein L5 of the 50S subunit (bridge B1b), connecting the 2 subunits; these bridges are implicated in subunit movement. Contacts the tRNAs in the A and P-sites.</text>
</comment>
<comment type="subunit">
    <text evidence="1">Part of the 30S ribosomal subunit. Forms a loose heterodimer with protein S19. Forms two bridges to the 50S subunit in the 70S ribosome.</text>
</comment>
<comment type="similarity">
    <text evidence="1">Belongs to the universal ribosomal protein uS13 family.</text>
</comment>
<proteinExistence type="inferred from homology"/>
<accession>Q4AAG4</accession>
<protein>
    <recommendedName>
        <fullName evidence="1">Small ribosomal subunit protein uS13</fullName>
    </recommendedName>
    <alternativeName>
        <fullName evidence="3">30S ribosomal protein S13</fullName>
    </alternativeName>
</protein>
<dbReference type="EMBL" id="AE017243">
    <property type="protein sequence ID" value="AAZ44257.1"/>
    <property type="molecule type" value="Genomic_DNA"/>
</dbReference>
<dbReference type="RefSeq" id="WP_011206048.1">
    <property type="nucleotide sequence ID" value="NC_007295.1"/>
</dbReference>
<dbReference type="SMR" id="Q4AAG4"/>
<dbReference type="GeneID" id="41334469"/>
<dbReference type="KEGG" id="mhj:MHJ_0166"/>
<dbReference type="eggNOG" id="COG0099">
    <property type="taxonomic scope" value="Bacteria"/>
</dbReference>
<dbReference type="HOGENOM" id="CLU_103849_1_2_14"/>
<dbReference type="OrthoDB" id="9803610at2"/>
<dbReference type="Proteomes" id="UP000000548">
    <property type="component" value="Chromosome"/>
</dbReference>
<dbReference type="GO" id="GO:0005829">
    <property type="term" value="C:cytosol"/>
    <property type="evidence" value="ECO:0007669"/>
    <property type="project" value="TreeGrafter"/>
</dbReference>
<dbReference type="GO" id="GO:0015935">
    <property type="term" value="C:small ribosomal subunit"/>
    <property type="evidence" value="ECO:0007669"/>
    <property type="project" value="TreeGrafter"/>
</dbReference>
<dbReference type="GO" id="GO:0019843">
    <property type="term" value="F:rRNA binding"/>
    <property type="evidence" value="ECO:0007669"/>
    <property type="project" value="UniProtKB-UniRule"/>
</dbReference>
<dbReference type="GO" id="GO:0003735">
    <property type="term" value="F:structural constituent of ribosome"/>
    <property type="evidence" value="ECO:0007669"/>
    <property type="project" value="InterPro"/>
</dbReference>
<dbReference type="GO" id="GO:0000049">
    <property type="term" value="F:tRNA binding"/>
    <property type="evidence" value="ECO:0007669"/>
    <property type="project" value="UniProtKB-UniRule"/>
</dbReference>
<dbReference type="GO" id="GO:0006412">
    <property type="term" value="P:translation"/>
    <property type="evidence" value="ECO:0007669"/>
    <property type="project" value="UniProtKB-UniRule"/>
</dbReference>
<dbReference type="FunFam" id="4.10.910.10:FF:000001">
    <property type="entry name" value="30S ribosomal protein S13"/>
    <property type="match status" value="1"/>
</dbReference>
<dbReference type="Gene3D" id="1.10.8.50">
    <property type="match status" value="1"/>
</dbReference>
<dbReference type="Gene3D" id="4.10.910.10">
    <property type="entry name" value="30s ribosomal protein s13, domain 2"/>
    <property type="match status" value="1"/>
</dbReference>
<dbReference type="HAMAP" id="MF_01315">
    <property type="entry name" value="Ribosomal_uS13"/>
    <property type="match status" value="1"/>
</dbReference>
<dbReference type="InterPro" id="IPR027437">
    <property type="entry name" value="Rbsml_uS13_C"/>
</dbReference>
<dbReference type="InterPro" id="IPR001892">
    <property type="entry name" value="Ribosomal_uS13"/>
</dbReference>
<dbReference type="InterPro" id="IPR010979">
    <property type="entry name" value="Ribosomal_uS13-like_H2TH"/>
</dbReference>
<dbReference type="InterPro" id="IPR018269">
    <property type="entry name" value="Ribosomal_uS13_CS"/>
</dbReference>
<dbReference type="PANTHER" id="PTHR10871">
    <property type="entry name" value="30S RIBOSOMAL PROTEIN S13/40S RIBOSOMAL PROTEIN S18"/>
    <property type="match status" value="1"/>
</dbReference>
<dbReference type="PANTHER" id="PTHR10871:SF1">
    <property type="entry name" value="SMALL RIBOSOMAL SUBUNIT PROTEIN US13M"/>
    <property type="match status" value="1"/>
</dbReference>
<dbReference type="Pfam" id="PF00416">
    <property type="entry name" value="Ribosomal_S13"/>
    <property type="match status" value="1"/>
</dbReference>
<dbReference type="PIRSF" id="PIRSF002134">
    <property type="entry name" value="Ribosomal_S13"/>
    <property type="match status" value="1"/>
</dbReference>
<dbReference type="SUPFAM" id="SSF46946">
    <property type="entry name" value="S13-like H2TH domain"/>
    <property type="match status" value="1"/>
</dbReference>
<dbReference type="PROSITE" id="PS00646">
    <property type="entry name" value="RIBOSOMAL_S13_1"/>
    <property type="match status" value="1"/>
</dbReference>
<dbReference type="PROSITE" id="PS50159">
    <property type="entry name" value="RIBOSOMAL_S13_2"/>
    <property type="match status" value="1"/>
</dbReference>
<reference key="1">
    <citation type="journal article" date="2005" name="J. Bacteriol.">
        <title>Swine and poultry pathogens: the complete genome sequences of two strains of Mycoplasma hyopneumoniae and a strain of Mycoplasma synoviae.</title>
        <authorList>
            <person name="Vasconcelos A.T.R."/>
            <person name="Ferreira H.B."/>
            <person name="Bizarro C.V."/>
            <person name="Bonatto S.L."/>
            <person name="Carvalho M.O."/>
            <person name="Pinto P.M."/>
            <person name="Almeida D.F."/>
            <person name="Almeida L.G.P."/>
            <person name="Almeida R."/>
            <person name="Alves-Junior L."/>
            <person name="Assuncao E.N."/>
            <person name="Azevedo V.A.C."/>
            <person name="Bogo M.R."/>
            <person name="Brigido M.M."/>
            <person name="Brocchi M."/>
            <person name="Burity H.A."/>
            <person name="Camargo A.A."/>
            <person name="Camargo S.S."/>
            <person name="Carepo M.S."/>
            <person name="Carraro D.M."/>
            <person name="de Mattos Cascardo J.C."/>
            <person name="Castro L.A."/>
            <person name="Cavalcanti G."/>
            <person name="Chemale G."/>
            <person name="Collevatti R.G."/>
            <person name="Cunha C.W."/>
            <person name="Dallagiovanna B."/>
            <person name="Dambros B.P."/>
            <person name="Dellagostin O.A."/>
            <person name="Falcao C."/>
            <person name="Fantinatti-Garboggini F."/>
            <person name="Felipe M.S.S."/>
            <person name="Fiorentin L."/>
            <person name="Franco G.R."/>
            <person name="Freitas N.S.A."/>
            <person name="Frias D."/>
            <person name="Grangeiro T.B."/>
            <person name="Grisard E.C."/>
            <person name="Guimaraes C.T."/>
            <person name="Hungria M."/>
            <person name="Jardim S.N."/>
            <person name="Krieger M.A."/>
            <person name="Laurino J.P."/>
            <person name="Lima L.F.A."/>
            <person name="Lopes M.I."/>
            <person name="Loreto E.L.S."/>
            <person name="Madeira H.M.F."/>
            <person name="Manfio G.P."/>
            <person name="Maranhao A.Q."/>
            <person name="Martinkovics C.T."/>
            <person name="Medeiros S.R.B."/>
            <person name="Moreira M.A.M."/>
            <person name="Neiva M."/>
            <person name="Ramalho-Neto C.E."/>
            <person name="Nicolas M.F."/>
            <person name="Oliveira S.C."/>
            <person name="Paixao R.F.C."/>
            <person name="Pedrosa F.O."/>
            <person name="Pena S.D.J."/>
            <person name="Pereira M."/>
            <person name="Pereira-Ferrari L."/>
            <person name="Piffer I."/>
            <person name="Pinto L.S."/>
            <person name="Potrich D.P."/>
            <person name="Salim A.C.M."/>
            <person name="Santos F.R."/>
            <person name="Schmitt R."/>
            <person name="Schneider M.P.C."/>
            <person name="Schrank A."/>
            <person name="Schrank I.S."/>
            <person name="Schuck A.F."/>
            <person name="Seuanez H.N."/>
            <person name="Silva D.W."/>
            <person name="Silva R."/>
            <person name="Silva S.C."/>
            <person name="Soares C.M.A."/>
            <person name="Souza K.R.L."/>
            <person name="Souza R.C."/>
            <person name="Staats C.C."/>
            <person name="Steffens M.B.R."/>
            <person name="Teixeira S.M.R."/>
            <person name="Urmenyi T.P."/>
            <person name="Vainstein M.H."/>
            <person name="Zuccherato L.W."/>
            <person name="Simpson A.J.G."/>
            <person name="Zaha A."/>
        </authorList>
    </citation>
    <scope>NUCLEOTIDE SEQUENCE [LARGE SCALE GENOMIC DNA]</scope>
    <source>
        <strain>J / ATCC 25934 / NCTC 10110</strain>
    </source>
</reference>
<feature type="chain" id="PRO_0000306657" description="Small ribosomal subunit protein uS13">
    <location>
        <begin position="1"/>
        <end position="137"/>
    </location>
</feature>
<feature type="region of interest" description="Disordered" evidence="2">
    <location>
        <begin position="114"/>
        <end position="137"/>
    </location>
</feature>
<feature type="compositionally biased region" description="Basic residues" evidence="2">
    <location>
        <begin position="119"/>
        <end position="130"/>
    </location>
</feature>
<name>RS13_MESHJ</name>
<keyword id="KW-0687">Ribonucleoprotein</keyword>
<keyword id="KW-0689">Ribosomal protein</keyword>
<keyword id="KW-0694">RNA-binding</keyword>
<keyword id="KW-0699">rRNA-binding</keyword>
<keyword id="KW-0820">tRNA-binding</keyword>
<gene>
    <name evidence="1" type="primary">rpsM</name>
    <name type="ordered locus">MHJ_0166</name>
</gene>